<name>POS5_SCHPO</name>
<gene>
    <name type="primary">pos5</name>
    <name type="ORF">SPAC323.01c</name>
</gene>
<keyword id="KW-0067">ATP-binding</keyword>
<keyword id="KW-0418">Kinase</keyword>
<keyword id="KW-0496">Mitochondrion</keyword>
<keyword id="KW-0520">NAD</keyword>
<keyword id="KW-0521">NADP</keyword>
<keyword id="KW-0547">Nucleotide-binding</keyword>
<keyword id="KW-1185">Reference proteome</keyword>
<keyword id="KW-0808">Transferase</keyword>
<keyword id="KW-0809">Transit peptide</keyword>
<comment type="function">
    <text evidence="1">Phosphorylates both NADH and NAD(+), with a preference for NADH. Anti-oxidant factor and key source of the cellular reductant NADPH (By similarity).</text>
</comment>
<comment type="catalytic activity">
    <reaction>
        <text>NADH + ATP = ADP + NADPH + H(+)</text>
        <dbReference type="Rhea" id="RHEA:12260"/>
        <dbReference type="ChEBI" id="CHEBI:15378"/>
        <dbReference type="ChEBI" id="CHEBI:30616"/>
        <dbReference type="ChEBI" id="CHEBI:57783"/>
        <dbReference type="ChEBI" id="CHEBI:57945"/>
        <dbReference type="ChEBI" id="CHEBI:456216"/>
        <dbReference type="EC" id="2.7.1.86"/>
    </reaction>
</comment>
<comment type="subcellular location">
    <subcellularLocation>
        <location evidence="3">Mitochondrion</location>
    </subcellularLocation>
</comment>
<comment type="similarity">
    <text evidence="4">Belongs to the NAD kinase family.</text>
</comment>
<dbReference type="EC" id="2.7.1.86"/>
<dbReference type="EMBL" id="CU329670">
    <property type="protein sequence ID" value="CAB53404.2"/>
    <property type="molecule type" value="Genomic_DNA"/>
</dbReference>
<dbReference type="PIR" id="T38638">
    <property type="entry name" value="T38638"/>
</dbReference>
<dbReference type="RefSeq" id="NP_594371.2">
    <property type="nucleotide sequence ID" value="NM_001019792.2"/>
</dbReference>
<dbReference type="SMR" id="Q9UT98"/>
<dbReference type="BioGRID" id="279603">
    <property type="interactions" value="3"/>
</dbReference>
<dbReference type="FunCoup" id="Q9UT98">
    <property type="interactions" value="5"/>
</dbReference>
<dbReference type="STRING" id="284812.Q9UT98"/>
<dbReference type="iPTMnet" id="Q9UT98"/>
<dbReference type="PaxDb" id="4896-SPAC323.01c.1"/>
<dbReference type="EnsemblFungi" id="SPAC323.01c.1">
    <property type="protein sequence ID" value="SPAC323.01c.1:pep"/>
    <property type="gene ID" value="SPAC323.01c"/>
</dbReference>
<dbReference type="GeneID" id="2543173"/>
<dbReference type="KEGG" id="spo:2543173"/>
<dbReference type="PomBase" id="SPAC323.01c">
    <property type="gene designation" value="pos5"/>
</dbReference>
<dbReference type="VEuPathDB" id="FungiDB:SPAC323.01c"/>
<dbReference type="eggNOG" id="KOG2178">
    <property type="taxonomic scope" value="Eukaryota"/>
</dbReference>
<dbReference type="HOGENOM" id="CLU_008831_10_2_1"/>
<dbReference type="InParanoid" id="Q9UT98"/>
<dbReference type="OMA" id="IPKYQES"/>
<dbReference type="PRO" id="PR:Q9UT98"/>
<dbReference type="Proteomes" id="UP000002485">
    <property type="component" value="Chromosome I"/>
</dbReference>
<dbReference type="GO" id="GO:0005759">
    <property type="term" value="C:mitochondrial matrix"/>
    <property type="evidence" value="ECO:0000266"/>
    <property type="project" value="PomBase"/>
</dbReference>
<dbReference type="GO" id="GO:0005739">
    <property type="term" value="C:mitochondrion"/>
    <property type="evidence" value="ECO:0007005"/>
    <property type="project" value="PomBase"/>
</dbReference>
<dbReference type="GO" id="GO:0005524">
    <property type="term" value="F:ATP binding"/>
    <property type="evidence" value="ECO:0007669"/>
    <property type="project" value="UniProtKB-KW"/>
</dbReference>
<dbReference type="GO" id="GO:0003951">
    <property type="term" value="F:NAD+ kinase activity"/>
    <property type="evidence" value="ECO:0000318"/>
    <property type="project" value="GO_Central"/>
</dbReference>
<dbReference type="GO" id="GO:0042736">
    <property type="term" value="F:NADH kinase activity"/>
    <property type="evidence" value="ECO:0000266"/>
    <property type="project" value="PomBase"/>
</dbReference>
<dbReference type="GO" id="GO:0019674">
    <property type="term" value="P:NAD metabolic process"/>
    <property type="evidence" value="ECO:0007669"/>
    <property type="project" value="InterPro"/>
</dbReference>
<dbReference type="GO" id="GO:0006741">
    <property type="term" value="P:NADP biosynthetic process"/>
    <property type="evidence" value="ECO:0000318"/>
    <property type="project" value="GO_Central"/>
</dbReference>
<dbReference type="FunFam" id="2.60.200.30:FF:000009">
    <property type="entry name" value="Poly(P)/ATP NAD kinase"/>
    <property type="match status" value="1"/>
</dbReference>
<dbReference type="Gene3D" id="3.40.50.10330">
    <property type="entry name" value="Probable inorganic polyphosphate/atp-NAD kinase, domain 1"/>
    <property type="match status" value="1"/>
</dbReference>
<dbReference type="Gene3D" id="2.60.200.30">
    <property type="entry name" value="Probable inorganic polyphosphate/atp-NAD kinase, domain 2"/>
    <property type="match status" value="1"/>
</dbReference>
<dbReference type="HAMAP" id="MF_00361">
    <property type="entry name" value="NAD_kinase"/>
    <property type="match status" value="1"/>
</dbReference>
<dbReference type="InterPro" id="IPR017438">
    <property type="entry name" value="ATP-NAD_kinase_N"/>
</dbReference>
<dbReference type="InterPro" id="IPR017437">
    <property type="entry name" value="ATP-NAD_kinase_PpnK-typ_C"/>
</dbReference>
<dbReference type="InterPro" id="IPR016064">
    <property type="entry name" value="NAD/diacylglycerol_kinase_sf"/>
</dbReference>
<dbReference type="InterPro" id="IPR002504">
    <property type="entry name" value="NADK"/>
</dbReference>
<dbReference type="PANTHER" id="PTHR20275">
    <property type="entry name" value="NAD KINASE"/>
    <property type="match status" value="1"/>
</dbReference>
<dbReference type="PANTHER" id="PTHR20275:SF26">
    <property type="entry name" value="NADH KINASE POS5, MITOCHONDRIAL"/>
    <property type="match status" value="1"/>
</dbReference>
<dbReference type="Pfam" id="PF01513">
    <property type="entry name" value="NAD_kinase"/>
    <property type="match status" value="1"/>
</dbReference>
<dbReference type="Pfam" id="PF20143">
    <property type="entry name" value="NAD_kinase_C"/>
    <property type="match status" value="1"/>
</dbReference>
<dbReference type="SUPFAM" id="SSF111331">
    <property type="entry name" value="NAD kinase/diacylglycerol kinase-like"/>
    <property type="match status" value="1"/>
</dbReference>
<sequence length="386" mass="43500">MIRAANGFRISVRNTAVCLAPNFRQLKGFSIINLGSLQYFRYNSVYSKSIRLVNTLENRIVPVYKECASPQSIGGKSNLKQLQWPKPPKNILILKKRMDERVDHCFETLVQHLQQTYPDICIITETDVAKKFSYLNLYTWTEISDLEQKVDAIITVGGDGTILHAASLFARSGMPPILSFSLGTLGFLLPFDFGSFQTAFADFYNSRSFVLMRMRLRVAMKTKLYNESIYAMNEMHIHRGLSPHMAVLKVFVNDKFLTEAVADGLIISTPTGSTAYSLSSGGPIVHPSINALLLTPICPNSLSFRPVLFPDTFKISIETSNKSRVRPQLSIDGRPLGLTDIGQRIDITSVKDNAIPCIIRSHKEDDWVSDIVSLLRWNHPFHRKGW</sequence>
<evidence type="ECO:0000250" key="1"/>
<evidence type="ECO:0000255" key="2"/>
<evidence type="ECO:0000269" key="3">
    <source>
    </source>
</evidence>
<evidence type="ECO:0000305" key="4"/>
<protein>
    <recommendedName>
        <fullName>NADH kinase pos5, mitochondrial</fullName>
        <ecNumber>2.7.1.86</ecNumber>
    </recommendedName>
</protein>
<reference key="1">
    <citation type="journal article" date="2002" name="Nature">
        <title>The genome sequence of Schizosaccharomyces pombe.</title>
        <authorList>
            <person name="Wood V."/>
            <person name="Gwilliam R."/>
            <person name="Rajandream M.A."/>
            <person name="Lyne M.H."/>
            <person name="Lyne R."/>
            <person name="Stewart A."/>
            <person name="Sgouros J.G."/>
            <person name="Peat N."/>
            <person name="Hayles J."/>
            <person name="Baker S.G."/>
            <person name="Basham D."/>
            <person name="Bowman S."/>
            <person name="Brooks K."/>
            <person name="Brown D."/>
            <person name="Brown S."/>
            <person name="Chillingworth T."/>
            <person name="Churcher C.M."/>
            <person name="Collins M."/>
            <person name="Connor R."/>
            <person name="Cronin A."/>
            <person name="Davis P."/>
            <person name="Feltwell T."/>
            <person name="Fraser A."/>
            <person name="Gentles S."/>
            <person name="Goble A."/>
            <person name="Hamlin N."/>
            <person name="Harris D.E."/>
            <person name="Hidalgo J."/>
            <person name="Hodgson G."/>
            <person name="Holroyd S."/>
            <person name="Hornsby T."/>
            <person name="Howarth S."/>
            <person name="Huckle E.J."/>
            <person name="Hunt S."/>
            <person name="Jagels K."/>
            <person name="James K.D."/>
            <person name="Jones L."/>
            <person name="Jones M."/>
            <person name="Leather S."/>
            <person name="McDonald S."/>
            <person name="McLean J."/>
            <person name="Mooney P."/>
            <person name="Moule S."/>
            <person name="Mungall K.L."/>
            <person name="Murphy L.D."/>
            <person name="Niblett D."/>
            <person name="Odell C."/>
            <person name="Oliver K."/>
            <person name="O'Neil S."/>
            <person name="Pearson D."/>
            <person name="Quail M.A."/>
            <person name="Rabbinowitsch E."/>
            <person name="Rutherford K.M."/>
            <person name="Rutter S."/>
            <person name="Saunders D."/>
            <person name="Seeger K."/>
            <person name="Sharp S."/>
            <person name="Skelton J."/>
            <person name="Simmonds M.N."/>
            <person name="Squares R."/>
            <person name="Squares S."/>
            <person name="Stevens K."/>
            <person name="Taylor K."/>
            <person name="Taylor R.G."/>
            <person name="Tivey A."/>
            <person name="Walsh S.V."/>
            <person name="Warren T."/>
            <person name="Whitehead S."/>
            <person name="Woodward J.R."/>
            <person name="Volckaert G."/>
            <person name="Aert R."/>
            <person name="Robben J."/>
            <person name="Grymonprez B."/>
            <person name="Weltjens I."/>
            <person name="Vanstreels E."/>
            <person name="Rieger M."/>
            <person name="Schaefer M."/>
            <person name="Mueller-Auer S."/>
            <person name="Gabel C."/>
            <person name="Fuchs M."/>
            <person name="Duesterhoeft A."/>
            <person name="Fritzc C."/>
            <person name="Holzer E."/>
            <person name="Moestl D."/>
            <person name="Hilbert H."/>
            <person name="Borzym K."/>
            <person name="Langer I."/>
            <person name="Beck A."/>
            <person name="Lehrach H."/>
            <person name="Reinhardt R."/>
            <person name="Pohl T.M."/>
            <person name="Eger P."/>
            <person name="Zimmermann W."/>
            <person name="Wedler H."/>
            <person name="Wambutt R."/>
            <person name="Purnelle B."/>
            <person name="Goffeau A."/>
            <person name="Cadieu E."/>
            <person name="Dreano S."/>
            <person name="Gloux S."/>
            <person name="Lelaure V."/>
            <person name="Mottier S."/>
            <person name="Galibert F."/>
            <person name="Aves S.J."/>
            <person name="Xiang Z."/>
            <person name="Hunt C."/>
            <person name="Moore K."/>
            <person name="Hurst S.M."/>
            <person name="Lucas M."/>
            <person name="Rochet M."/>
            <person name="Gaillardin C."/>
            <person name="Tallada V.A."/>
            <person name="Garzon A."/>
            <person name="Thode G."/>
            <person name="Daga R.R."/>
            <person name="Cruzado L."/>
            <person name="Jimenez J."/>
            <person name="Sanchez M."/>
            <person name="del Rey F."/>
            <person name="Benito J."/>
            <person name="Dominguez A."/>
            <person name="Revuelta J.L."/>
            <person name="Moreno S."/>
            <person name="Armstrong J."/>
            <person name="Forsburg S.L."/>
            <person name="Cerutti L."/>
            <person name="Lowe T."/>
            <person name="McCombie W.R."/>
            <person name="Paulsen I."/>
            <person name="Potashkin J."/>
            <person name="Shpakovski G.V."/>
            <person name="Ussery D."/>
            <person name="Barrell B.G."/>
            <person name="Nurse P."/>
        </authorList>
    </citation>
    <scope>NUCLEOTIDE SEQUENCE [LARGE SCALE GENOMIC DNA]</scope>
    <source>
        <strain>972 / ATCC 24843</strain>
    </source>
</reference>
<reference key="2">
    <citation type="journal article" date="2011" name="Science">
        <title>Comparative functional genomics of the fission yeasts.</title>
        <authorList>
            <person name="Rhind N."/>
            <person name="Chen Z."/>
            <person name="Yassour M."/>
            <person name="Thompson D.A."/>
            <person name="Haas B.J."/>
            <person name="Habib N."/>
            <person name="Wapinski I."/>
            <person name="Roy S."/>
            <person name="Lin M.F."/>
            <person name="Heiman D.I."/>
            <person name="Young S.K."/>
            <person name="Furuya K."/>
            <person name="Guo Y."/>
            <person name="Pidoux A."/>
            <person name="Chen H.M."/>
            <person name="Robbertse B."/>
            <person name="Goldberg J.M."/>
            <person name="Aoki K."/>
            <person name="Bayne E.H."/>
            <person name="Berlin A.M."/>
            <person name="Desjardins C.A."/>
            <person name="Dobbs E."/>
            <person name="Dukaj L."/>
            <person name="Fan L."/>
            <person name="FitzGerald M.G."/>
            <person name="French C."/>
            <person name="Gujja S."/>
            <person name="Hansen K."/>
            <person name="Keifenheim D."/>
            <person name="Levin J.Z."/>
            <person name="Mosher R.A."/>
            <person name="Mueller C.A."/>
            <person name="Pfiffner J."/>
            <person name="Priest M."/>
            <person name="Russ C."/>
            <person name="Smialowska A."/>
            <person name="Swoboda P."/>
            <person name="Sykes S.M."/>
            <person name="Vaughn M."/>
            <person name="Vengrova S."/>
            <person name="Yoder R."/>
            <person name="Zeng Q."/>
            <person name="Allshire R."/>
            <person name="Baulcombe D."/>
            <person name="Birren B.W."/>
            <person name="Brown W."/>
            <person name="Ekwall K."/>
            <person name="Kellis M."/>
            <person name="Leatherwood J."/>
            <person name="Levin H."/>
            <person name="Margalit H."/>
            <person name="Martienssen R."/>
            <person name="Nieduszynski C.A."/>
            <person name="Spatafora J.W."/>
            <person name="Friedman N."/>
            <person name="Dalgaard J.Z."/>
            <person name="Baumann P."/>
            <person name="Niki H."/>
            <person name="Regev A."/>
            <person name="Nusbaum C."/>
        </authorList>
    </citation>
    <scope>REVISION OF GENE MODEL</scope>
</reference>
<reference key="3">
    <citation type="journal article" date="2006" name="Nat. Biotechnol.">
        <title>ORFeome cloning and global analysis of protein localization in the fission yeast Schizosaccharomyces pombe.</title>
        <authorList>
            <person name="Matsuyama A."/>
            <person name="Arai R."/>
            <person name="Yashiroda Y."/>
            <person name="Shirai A."/>
            <person name="Kamata A."/>
            <person name="Sekido S."/>
            <person name="Kobayashi Y."/>
            <person name="Hashimoto A."/>
            <person name="Hamamoto M."/>
            <person name="Hiraoka Y."/>
            <person name="Horinouchi S."/>
            <person name="Yoshida M."/>
        </authorList>
    </citation>
    <scope>SUBCELLULAR LOCATION [LARGE SCALE ANALYSIS]</scope>
</reference>
<organism>
    <name type="scientific">Schizosaccharomyces pombe (strain 972 / ATCC 24843)</name>
    <name type="common">Fission yeast</name>
    <dbReference type="NCBI Taxonomy" id="284812"/>
    <lineage>
        <taxon>Eukaryota</taxon>
        <taxon>Fungi</taxon>
        <taxon>Dikarya</taxon>
        <taxon>Ascomycota</taxon>
        <taxon>Taphrinomycotina</taxon>
        <taxon>Schizosaccharomycetes</taxon>
        <taxon>Schizosaccharomycetales</taxon>
        <taxon>Schizosaccharomycetaceae</taxon>
        <taxon>Schizosaccharomyces</taxon>
    </lineage>
</organism>
<feature type="transit peptide" description="Mitochondrion" evidence="2">
    <location>
        <begin position="1"/>
        <end position="42"/>
    </location>
</feature>
<feature type="chain" id="PRO_0000316603" description="NADH kinase pos5, mitochondrial">
    <location>
        <begin position="43"/>
        <end position="386"/>
    </location>
</feature>
<proteinExistence type="inferred from homology"/>
<accession>Q9UT98</accession>